<organism>
    <name type="scientific">Methylobacterium radiotolerans (strain ATCC 27329 / DSM 1819 / JCM 2831 / NBRC 15690 / NCIMB 10815 / 0-1)</name>
    <dbReference type="NCBI Taxonomy" id="426355"/>
    <lineage>
        <taxon>Bacteria</taxon>
        <taxon>Pseudomonadati</taxon>
        <taxon>Pseudomonadota</taxon>
        <taxon>Alphaproteobacteria</taxon>
        <taxon>Hyphomicrobiales</taxon>
        <taxon>Methylobacteriaceae</taxon>
        <taxon>Methylobacterium</taxon>
    </lineage>
</organism>
<evidence type="ECO:0000255" key="1">
    <source>
        <dbReference type="HAMAP-Rule" id="MF_00113"/>
    </source>
</evidence>
<feature type="chain" id="PRO_1000094790" description="S-adenosylmethionine:tRNA ribosyltransferase-isomerase">
    <location>
        <begin position="1"/>
        <end position="354"/>
    </location>
</feature>
<name>QUEA_METRJ</name>
<gene>
    <name evidence="1" type="primary">queA</name>
    <name type="ordered locus">Mrad2831_0020</name>
</gene>
<dbReference type="EC" id="2.4.99.17" evidence="1"/>
<dbReference type="EMBL" id="CP001001">
    <property type="protein sequence ID" value="ACB22047.1"/>
    <property type="molecule type" value="Genomic_DNA"/>
</dbReference>
<dbReference type="RefSeq" id="WP_012317048.1">
    <property type="nucleotide sequence ID" value="NC_010505.1"/>
</dbReference>
<dbReference type="SMR" id="B1M584"/>
<dbReference type="STRING" id="426355.Mrad2831_0020"/>
<dbReference type="GeneID" id="6136319"/>
<dbReference type="KEGG" id="mrd:Mrad2831_0020"/>
<dbReference type="PATRIC" id="fig|426355.14.peg.43"/>
<dbReference type="eggNOG" id="COG0809">
    <property type="taxonomic scope" value="Bacteria"/>
</dbReference>
<dbReference type="HOGENOM" id="CLU_039110_1_1_5"/>
<dbReference type="OrthoDB" id="9805933at2"/>
<dbReference type="UniPathway" id="UPA00392"/>
<dbReference type="Proteomes" id="UP000006589">
    <property type="component" value="Chromosome"/>
</dbReference>
<dbReference type="GO" id="GO:0005737">
    <property type="term" value="C:cytoplasm"/>
    <property type="evidence" value="ECO:0007669"/>
    <property type="project" value="UniProtKB-SubCell"/>
</dbReference>
<dbReference type="GO" id="GO:0051075">
    <property type="term" value="F:S-adenosylmethionine:tRNA ribosyltransferase-isomerase activity"/>
    <property type="evidence" value="ECO:0007669"/>
    <property type="project" value="UniProtKB-EC"/>
</dbReference>
<dbReference type="GO" id="GO:0008616">
    <property type="term" value="P:queuosine biosynthetic process"/>
    <property type="evidence" value="ECO:0007669"/>
    <property type="project" value="UniProtKB-UniRule"/>
</dbReference>
<dbReference type="GO" id="GO:0002099">
    <property type="term" value="P:tRNA wobble guanine modification"/>
    <property type="evidence" value="ECO:0007669"/>
    <property type="project" value="TreeGrafter"/>
</dbReference>
<dbReference type="Gene3D" id="2.40.10.240">
    <property type="entry name" value="QueA-like"/>
    <property type="match status" value="1"/>
</dbReference>
<dbReference type="Gene3D" id="3.40.1780.10">
    <property type="entry name" value="QueA-like"/>
    <property type="match status" value="2"/>
</dbReference>
<dbReference type="HAMAP" id="MF_00113">
    <property type="entry name" value="QueA"/>
    <property type="match status" value="1"/>
</dbReference>
<dbReference type="InterPro" id="IPR003699">
    <property type="entry name" value="QueA"/>
</dbReference>
<dbReference type="InterPro" id="IPR042118">
    <property type="entry name" value="QueA_dom1"/>
</dbReference>
<dbReference type="InterPro" id="IPR042119">
    <property type="entry name" value="QueA_dom2"/>
</dbReference>
<dbReference type="InterPro" id="IPR036100">
    <property type="entry name" value="QueA_sf"/>
</dbReference>
<dbReference type="NCBIfam" id="NF001140">
    <property type="entry name" value="PRK00147.1"/>
    <property type="match status" value="1"/>
</dbReference>
<dbReference type="NCBIfam" id="TIGR00113">
    <property type="entry name" value="queA"/>
    <property type="match status" value="1"/>
</dbReference>
<dbReference type="PANTHER" id="PTHR30307">
    <property type="entry name" value="S-ADENOSYLMETHIONINE:TRNA RIBOSYLTRANSFERASE-ISOMERASE"/>
    <property type="match status" value="1"/>
</dbReference>
<dbReference type="PANTHER" id="PTHR30307:SF0">
    <property type="entry name" value="S-ADENOSYLMETHIONINE:TRNA RIBOSYLTRANSFERASE-ISOMERASE"/>
    <property type="match status" value="1"/>
</dbReference>
<dbReference type="Pfam" id="PF02547">
    <property type="entry name" value="Queuosine_synth"/>
    <property type="match status" value="1"/>
</dbReference>
<dbReference type="SUPFAM" id="SSF111337">
    <property type="entry name" value="QueA-like"/>
    <property type="match status" value="1"/>
</dbReference>
<proteinExistence type="inferred from homology"/>
<reference key="1">
    <citation type="submission" date="2008-03" db="EMBL/GenBank/DDBJ databases">
        <title>Complete sequence of chromosome of Methylobacterium radiotolerans JCM 2831.</title>
        <authorList>
            <consortium name="US DOE Joint Genome Institute"/>
            <person name="Copeland A."/>
            <person name="Lucas S."/>
            <person name="Lapidus A."/>
            <person name="Glavina del Rio T."/>
            <person name="Dalin E."/>
            <person name="Tice H."/>
            <person name="Bruce D."/>
            <person name="Goodwin L."/>
            <person name="Pitluck S."/>
            <person name="Kiss H."/>
            <person name="Brettin T."/>
            <person name="Detter J.C."/>
            <person name="Han C."/>
            <person name="Kuske C.R."/>
            <person name="Schmutz J."/>
            <person name="Larimer F."/>
            <person name="Land M."/>
            <person name="Hauser L."/>
            <person name="Kyrpides N."/>
            <person name="Mikhailova N."/>
            <person name="Marx C.J."/>
            <person name="Richardson P."/>
        </authorList>
    </citation>
    <scope>NUCLEOTIDE SEQUENCE [LARGE SCALE GENOMIC DNA]</scope>
    <source>
        <strain>ATCC 27329 / DSM 1819 / JCM 2831 / NBRC 15690 / NCIMB 10815 / 0-1</strain>
    </source>
</reference>
<accession>B1M584</accession>
<sequence>MRVDLFDFELPETSIALRPAEPRDAGRMLVVRPGAPLVDRTVRDLPDALRAGDALVFNDTRVIPARLNGVRTRPGAPGQRTEVMLHLREAPDRWRAFARPAKRLTAGDALRFGDLTATVLEKAEAGEIVLAFDRAGPELDAAIAAEGALPLPPYIAGKRATDARDATDYQTVYARNPGAVAAPTAGLHFSDALLADLDAAGLQRHHVTLHVGAGTFLPVKAEDTDGHRMHAEIGILDAATADALNAARAAGGRIVAVGTTALRLLESAARPDGTLAPFSGPTEIFITPGYRFRAVDALVTNFHLPRSTLFMLVSAFSGLETMRAAYAHAIGAGYRFYSYGDASLLFPGPRADTP</sequence>
<protein>
    <recommendedName>
        <fullName evidence="1">S-adenosylmethionine:tRNA ribosyltransferase-isomerase</fullName>
        <ecNumber evidence="1">2.4.99.17</ecNumber>
    </recommendedName>
    <alternativeName>
        <fullName evidence="1">Queuosine biosynthesis protein QueA</fullName>
    </alternativeName>
</protein>
<keyword id="KW-0963">Cytoplasm</keyword>
<keyword id="KW-0671">Queuosine biosynthesis</keyword>
<keyword id="KW-0949">S-adenosyl-L-methionine</keyword>
<keyword id="KW-0808">Transferase</keyword>
<comment type="function">
    <text evidence="1">Transfers and isomerizes the ribose moiety from AdoMet to the 7-aminomethyl group of 7-deazaguanine (preQ1-tRNA) to give epoxyqueuosine (oQ-tRNA).</text>
</comment>
<comment type="catalytic activity">
    <reaction evidence="1">
        <text>7-aminomethyl-7-carbaguanosine(34) in tRNA + S-adenosyl-L-methionine = epoxyqueuosine(34) in tRNA + adenine + L-methionine + 2 H(+)</text>
        <dbReference type="Rhea" id="RHEA:32155"/>
        <dbReference type="Rhea" id="RHEA-COMP:10342"/>
        <dbReference type="Rhea" id="RHEA-COMP:18582"/>
        <dbReference type="ChEBI" id="CHEBI:15378"/>
        <dbReference type="ChEBI" id="CHEBI:16708"/>
        <dbReference type="ChEBI" id="CHEBI:57844"/>
        <dbReference type="ChEBI" id="CHEBI:59789"/>
        <dbReference type="ChEBI" id="CHEBI:82833"/>
        <dbReference type="ChEBI" id="CHEBI:194443"/>
        <dbReference type="EC" id="2.4.99.17"/>
    </reaction>
</comment>
<comment type="pathway">
    <text evidence="1">tRNA modification; tRNA-queuosine biosynthesis.</text>
</comment>
<comment type="subunit">
    <text evidence="1">Monomer.</text>
</comment>
<comment type="subcellular location">
    <subcellularLocation>
        <location evidence="1">Cytoplasm</location>
    </subcellularLocation>
</comment>
<comment type="similarity">
    <text evidence="1">Belongs to the QueA family.</text>
</comment>